<evidence type="ECO:0000250" key="1"/>
<evidence type="ECO:0000255" key="2"/>
<evidence type="ECO:0000255" key="3">
    <source>
        <dbReference type="PROSITE-ProRule" id="PRU10037"/>
    </source>
</evidence>
<evidence type="ECO:0000305" key="4"/>
<name>PLA3_ORYSI</name>
<reference key="1">
    <citation type="journal article" date="2005" name="PLoS Biol.">
        <title>The genomes of Oryza sativa: a history of duplications.</title>
        <authorList>
            <person name="Yu J."/>
            <person name="Wang J."/>
            <person name="Lin W."/>
            <person name="Li S."/>
            <person name="Li H."/>
            <person name="Zhou J."/>
            <person name="Ni P."/>
            <person name="Dong W."/>
            <person name="Hu S."/>
            <person name="Zeng C."/>
            <person name="Zhang J."/>
            <person name="Zhang Y."/>
            <person name="Li R."/>
            <person name="Xu Z."/>
            <person name="Li S."/>
            <person name="Li X."/>
            <person name="Zheng H."/>
            <person name="Cong L."/>
            <person name="Lin L."/>
            <person name="Yin J."/>
            <person name="Geng J."/>
            <person name="Li G."/>
            <person name="Shi J."/>
            <person name="Liu J."/>
            <person name="Lv H."/>
            <person name="Li J."/>
            <person name="Wang J."/>
            <person name="Deng Y."/>
            <person name="Ran L."/>
            <person name="Shi X."/>
            <person name="Wang X."/>
            <person name="Wu Q."/>
            <person name="Li C."/>
            <person name="Ren X."/>
            <person name="Wang J."/>
            <person name="Wang X."/>
            <person name="Li D."/>
            <person name="Liu D."/>
            <person name="Zhang X."/>
            <person name="Ji Z."/>
            <person name="Zhao W."/>
            <person name="Sun Y."/>
            <person name="Zhang Z."/>
            <person name="Bao J."/>
            <person name="Han Y."/>
            <person name="Dong L."/>
            <person name="Ji J."/>
            <person name="Chen P."/>
            <person name="Wu S."/>
            <person name="Liu J."/>
            <person name="Xiao Y."/>
            <person name="Bu D."/>
            <person name="Tan J."/>
            <person name="Yang L."/>
            <person name="Ye C."/>
            <person name="Zhang J."/>
            <person name="Xu J."/>
            <person name="Zhou Y."/>
            <person name="Yu Y."/>
            <person name="Zhang B."/>
            <person name="Zhuang S."/>
            <person name="Wei H."/>
            <person name="Liu B."/>
            <person name="Lei M."/>
            <person name="Yu H."/>
            <person name="Li Y."/>
            <person name="Xu H."/>
            <person name="Wei S."/>
            <person name="He X."/>
            <person name="Fang L."/>
            <person name="Zhang Z."/>
            <person name="Zhang Y."/>
            <person name="Huang X."/>
            <person name="Su Z."/>
            <person name="Tong W."/>
            <person name="Li J."/>
            <person name="Tong Z."/>
            <person name="Li S."/>
            <person name="Ye J."/>
            <person name="Wang L."/>
            <person name="Fang L."/>
            <person name="Lei T."/>
            <person name="Chen C.-S."/>
            <person name="Chen H.-C."/>
            <person name="Xu Z."/>
            <person name="Li H."/>
            <person name="Huang H."/>
            <person name="Zhang F."/>
            <person name="Xu H."/>
            <person name="Li N."/>
            <person name="Zhao C."/>
            <person name="Li S."/>
            <person name="Dong L."/>
            <person name="Huang Y."/>
            <person name="Li L."/>
            <person name="Xi Y."/>
            <person name="Qi Q."/>
            <person name="Li W."/>
            <person name="Zhang B."/>
            <person name="Hu W."/>
            <person name="Zhang Y."/>
            <person name="Tian X."/>
            <person name="Jiao Y."/>
            <person name="Liang X."/>
            <person name="Jin J."/>
            <person name="Gao L."/>
            <person name="Zheng W."/>
            <person name="Hao B."/>
            <person name="Liu S.-M."/>
            <person name="Wang W."/>
            <person name="Yuan L."/>
            <person name="Cao M."/>
            <person name="McDermott J."/>
            <person name="Samudrala R."/>
            <person name="Wang J."/>
            <person name="Wong G.K.-S."/>
            <person name="Yang H."/>
        </authorList>
    </citation>
    <scope>NUCLEOTIDE SEQUENCE [LARGE SCALE GENOMIC DNA]</scope>
    <source>
        <strain>cv. 93-11</strain>
    </source>
</reference>
<proteinExistence type="inferred from homology"/>
<comment type="function">
    <text evidence="1">Acylhydrolase that catalyzes the hydrolysis of phospholipids at the sn-1 position.</text>
</comment>
<comment type="subcellular location">
    <subcellularLocation>
        <location evidence="4">Secreted</location>
    </subcellularLocation>
</comment>
<comment type="similarity">
    <text evidence="4">Belongs to the AB hydrolase superfamily. Lipase family.</text>
</comment>
<organism>
    <name type="scientific">Oryza sativa subsp. indica</name>
    <name type="common">Rice</name>
    <dbReference type="NCBI Taxonomy" id="39946"/>
    <lineage>
        <taxon>Eukaryota</taxon>
        <taxon>Viridiplantae</taxon>
        <taxon>Streptophyta</taxon>
        <taxon>Embryophyta</taxon>
        <taxon>Tracheophyta</taxon>
        <taxon>Spermatophyta</taxon>
        <taxon>Magnoliopsida</taxon>
        <taxon>Liliopsida</taxon>
        <taxon>Poales</taxon>
        <taxon>Poaceae</taxon>
        <taxon>BOP clade</taxon>
        <taxon>Oryzoideae</taxon>
        <taxon>Oryzeae</taxon>
        <taxon>Oryzinae</taxon>
        <taxon>Oryza</taxon>
        <taxon>Oryza sativa</taxon>
    </lineage>
</organism>
<accession>A2WTA0</accession>
<feature type="signal peptide" evidence="2">
    <location>
        <begin position="1"/>
        <end position="21"/>
    </location>
</feature>
<feature type="chain" id="PRO_0000409367" description="Phospholipase A1-II 3">
    <location>
        <begin position="22"/>
        <end position="420"/>
    </location>
</feature>
<feature type="coiled-coil region" evidence="2">
    <location>
        <begin position="367"/>
        <end position="388"/>
    </location>
</feature>
<feature type="active site" description="Acyl-ester intermediate" evidence="1">
    <location>
        <position position="240"/>
    </location>
</feature>
<feature type="active site" description="Charge relay system" evidence="3">
    <location>
        <position position="240"/>
    </location>
</feature>
<feature type="active site" description="Charge relay system" evidence="3">
    <location>
        <position position="305"/>
    </location>
</feature>
<feature type="active site" description="Charge relay system" evidence="3">
    <location>
        <position position="343"/>
    </location>
</feature>
<feature type="glycosylation site" description="N-linked (GlcNAc...) asparagine" evidence="2">
    <location>
        <position position="231"/>
    </location>
</feature>
<feature type="glycosylation site" description="N-linked (GlcNAc...) asparagine" evidence="2">
    <location>
        <position position="294"/>
    </location>
</feature>
<feature type="glycosylation site" description="N-linked (GlcNAc...) asparagine" evidence="2">
    <location>
        <position position="403"/>
    </location>
</feature>
<gene>
    <name type="ORF">OsI_03088</name>
</gene>
<dbReference type="EC" id="3.1.1.-"/>
<dbReference type="EMBL" id="CM000126">
    <property type="protein sequence ID" value="EAY75196.1"/>
    <property type="molecule type" value="Genomic_DNA"/>
</dbReference>
<dbReference type="SMR" id="A2WTA0"/>
<dbReference type="STRING" id="39946.A2WTA0"/>
<dbReference type="ESTHER" id="orysa-Q8RZ40">
    <property type="family name" value="Plant_phospholipase"/>
</dbReference>
<dbReference type="EnsemblPlants" id="BGIOSGA004123-TA">
    <property type="protein sequence ID" value="BGIOSGA004123-PA"/>
    <property type="gene ID" value="BGIOSGA004123"/>
</dbReference>
<dbReference type="EnsemblPlants" id="OsGoSa_01g0026550.01">
    <property type="protein sequence ID" value="OsGoSa_01g0026550.01"/>
    <property type="gene ID" value="OsGoSa_01g0026550"/>
</dbReference>
<dbReference type="EnsemblPlants" id="OsIR64_01g0026050.01">
    <property type="protein sequence ID" value="OsIR64_01g0026050.01"/>
    <property type="gene ID" value="OsIR64_01g0026050"/>
</dbReference>
<dbReference type="EnsemblPlants" id="OsKYG_01g0026220.01">
    <property type="protein sequence ID" value="OsKYG_01g0026220.01"/>
    <property type="gene ID" value="OsKYG_01g0026220"/>
</dbReference>
<dbReference type="EnsemblPlants" id="OsLaMu_01g0026430.01">
    <property type="protein sequence ID" value="OsLaMu_01g0026430.01"/>
    <property type="gene ID" value="OsLaMu_01g0026430"/>
</dbReference>
<dbReference type="EnsemblPlants" id="OsLima_01g0026300.01">
    <property type="protein sequence ID" value="OsLima_01g0026300.01"/>
    <property type="gene ID" value="OsLima_01g0026300"/>
</dbReference>
<dbReference type="EnsemblPlants" id="OsLiXu_01g0026600.01">
    <property type="protein sequence ID" value="OsLiXu_01g0026600.01"/>
    <property type="gene ID" value="OsLiXu_01g0026600"/>
</dbReference>
<dbReference type="EnsemblPlants" id="OsMH63_01G027110_01">
    <property type="protein sequence ID" value="OsMH63_01G027110_01"/>
    <property type="gene ID" value="OsMH63_01G027110"/>
</dbReference>
<dbReference type="EnsemblPlants" id="OsPr106_01g0026370.01">
    <property type="protein sequence ID" value="OsPr106_01g0026370.01"/>
    <property type="gene ID" value="OsPr106_01g0026370"/>
</dbReference>
<dbReference type="EnsemblPlants" id="OsZS97_01G026390_01">
    <property type="protein sequence ID" value="OsZS97_01G026390_01"/>
    <property type="gene ID" value="OsZS97_01G026390"/>
</dbReference>
<dbReference type="Gramene" id="BGIOSGA004123-TA">
    <property type="protein sequence ID" value="BGIOSGA004123-PA"/>
    <property type="gene ID" value="BGIOSGA004123"/>
</dbReference>
<dbReference type="Gramene" id="OsGoSa_01g0026550.01">
    <property type="protein sequence ID" value="OsGoSa_01g0026550.01"/>
    <property type="gene ID" value="OsGoSa_01g0026550"/>
</dbReference>
<dbReference type="Gramene" id="OsIR64_01g0026050.01">
    <property type="protein sequence ID" value="OsIR64_01g0026050.01"/>
    <property type="gene ID" value="OsIR64_01g0026050"/>
</dbReference>
<dbReference type="Gramene" id="OsKYG_01g0026220.01">
    <property type="protein sequence ID" value="OsKYG_01g0026220.01"/>
    <property type="gene ID" value="OsKYG_01g0026220"/>
</dbReference>
<dbReference type="Gramene" id="OsLaMu_01g0026430.01">
    <property type="protein sequence ID" value="OsLaMu_01g0026430.01"/>
    <property type="gene ID" value="OsLaMu_01g0026430"/>
</dbReference>
<dbReference type="Gramene" id="OsLima_01g0026300.01">
    <property type="protein sequence ID" value="OsLima_01g0026300.01"/>
    <property type="gene ID" value="OsLima_01g0026300"/>
</dbReference>
<dbReference type="Gramene" id="OsLiXu_01g0026600.01">
    <property type="protein sequence ID" value="OsLiXu_01g0026600.01"/>
    <property type="gene ID" value="OsLiXu_01g0026600"/>
</dbReference>
<dbReference type="Gramene" id="OsMH63_01G027110_01">
    <property type="protein sequence ID" value="OsMH63_01G027110_01"/>
    <property type="gene ID" value="OsMH63_01G027110"/>
</dbReference>
<dbReference type="Gramene" id="OsPr106_01g0026370.01">
    <property type="protein sequence ID" value="OsPr106_01g0026370.01"/>
    <property type="gene ID" value="OsPr106_01g0026370"/>
</dbReference>
<dbReference type="Gramene" id="OsZS97_01G026390_01">
    <property type="protein sequence ID" value="OsZS97_01G026390_01"/>
    <property type="gene ID" value="OsZS97_01G026390"/>
</dbReference>
<dbReference type="HOGENOM" id="CLU_018841_0_0_1"/>
<dbReference type="OMA" id="ECYLHAV"/>
<dbReference type="OrthoDB" id="438440at2759"/>
<dbReference type="Proteomes" id="UP000007015">
    <property type="component" value="Chromosome 1"/>
</dbReference>
<dbReference type="GO" id="GO:0005576">
    <property type="term" value="C:extracellular region"/>
    <property type="evidence" value="ECO:0007669"/>
    <property type="project" value="UniProtKB-SubCell"/>
</dbReference>
<dbReference type="GO" id="GO:0008970">
    <property type="term" value="F:phospholipase A1 activity"/>
    <property type="evidence" value="ECO:0000250"/>
    <property type="project" value="UniProtKB"/>
</dbReference>
<dbReference type="GO" id="GO:0016042">
    <property type="term" value="P:lipid catabolic process"/>
    <property type="evidence" value="ECO:0007669"/>
    <property type="project" value="UniProtKB-KW"/>
</dbReference>
<dbReference type="CDD" id="cd00519">
    <property type="entry name" value="Lipase_3"/>
    <property type="match status" value="1"/>
</dbReference>
<dbReference type="FunFam" id="3.40.50.1820:FF:000065">
    <property type="entry name" value="Phospholipase A1-II 3"/>
    <property type="match status" value="1"/>
</dbReference>
<dbReference type="Gene3D" id="3.40.50.1820">
    <property type="entry name" value="alpha/beta hydrolase"/>
    <property type="match status" value="1"/>
</dbReference>
<dbReference type="InterPro" id="IPR029058">
    <property type="entry name" value="AB_hydrolase_fold"/>
</dbReference>
<dbReference type="InterPro" id="IPR002921">
    <property type="entry name" value="Fungal_lipase-type"/>
</dbReference>
<dbReference type="InterPro" id="IPR033556">
    <property type="entry name" value="PLA"/>
</dbReference>
<dbReference type="PANTHER" id="PTHR31828:SF8">
    <property type="entry name" value="PHOSPHOLIPASE A1-II 3"/>
    <property type="match status" value="1"/>
</dbReference>
<dbReference type="PANTHER" id="PTHR31828">
    <property type="entry name" value="PHOSPHOLIPASE A1-IIGAMMA"/>
    <property type="match status" value="1"/>
</dbReference>
<dbReference type="Pfam" id="PF01764">
    <property type="entry name" value="Lipase_3"/>
    <property type="match status" value="1"/>
</dbReference>
<dbReference type="SUPFAM" id="SSF53474">
    <property type="entry name" value="alpha/beta-Hydrolases"/>
    <property type="match status" value="1"/>
</dbReference>
<dbReference type="PROSITE" id="PS00120">
    <property type="entry name" value="LIPASE_SER"/>
    <property type="match status" value="1"/>
</dbReference>
<sequence length="420" mass="45324">MCCFLLVSVLLATTLTDVASAQRWRQTSGGGKDRWDGLLDPLDADLRRDIIRYGELAQATSDALIGDPASPFAGASRYAPDAFLRKVRASDPDAYRVTRFVYATSSVRLPDAFMPRPAPSAGAAWSGESNWMGYVAVAADGVAANAGRRDIVVAWRGTKRAVEWANDLDITLVPADGVVGPGPGWTQPSVHRGFLSVYTSKSFSSPFNKLSAREQVLAEITRLLRAYKNENCSITITGHSLGAALSTLNAIDIVANGYNVRGSSRVPVPVTAIALASPRVGDDQFKRAFDSTPNLSLLRVRNAPDIVPTILPSAFFKDVGAELLVDTRRSPYLKNPAGPAQWHNLECYLHAVAGTQGAGDGAGFSLVVDRDLALVNKEVDALRDEYQVPAAWWVEKNKGMVQNASGRWVLQDHEEGNLAM</sequence>
<keyword id="KW-0175">Coiled coil</keyword>
<keyword id="KW-0325">Glycoprotein</keyword>
<keyword id="KW-0378">Hydrolase</keyword>
<keyword id="KW-0442">Lipid degradation</keyword>
<keyword id="KW-0443">Lipid metabolism</keyword>
<keyword id="KW-1185">Reference proteome</keyword>
<keyword id="KW-0964">Secreted</keyword>
<keyword id="KW-0732">Signal</keyword>
<protein>
    <recommendedName>
        <fullName>Phospholipase A1-II 3</fullName>
        <ecNumber>3.1.1.-</ecNumber>
    </recommendedName>
</protein>